<feature type="signal peptide" evidence="2">
    <location>
        <begin position="1"/>
        <end position="27"/>
    </location>
</feature>
<feature type="chain" id="PRO_5016105823" description="Apolipoprotein C-IV">
    <location>
        <begin position="28"/>
        <end position="123"/>
    </location>
</feature>
<keyword id="KW-0445">Lipid transport</keyword>
<keyword id="KW-1185">Reference proteome</keyword>
<keyword id="KW-0964">Secreted</keyword>
<keyword id="KW-0732">Signal</keyword>
<keyword id="KW-0813">Transport</keyword>
<comment type="function">
    <text evidence="1">May participate in lipoprotein metabolism.</text>
</comment>
<comment type="subcellular location">
    <subcellularLocation>
        <location evidence="1">Secreted</location>
    </subcellularLocation>
</comment>
<comment type="similarity">
    <text evidence="3">Belongs to the apolipoprotein C4 family.</text>
</comment>
<reference key="1">
    <citation type="submission" date="2017-05" db="EMBL/GenBank/DDBJ databases">
        <title>Improved de novo genome assembly: linked-read sequencing combined with optical mapping produce a high quality mammalian genome at relatively low cost.</title>
        <authorList>
            <person name="Mohr D.W."/>
            <person name="Scott A.F."/>
        </authorList>
    </citation>
    <scope>NUCLEOTIDE SEQUENCE [LARGE SCALE GENOMIC DNA]</scope>
</reference>
<reference key="2">
    <citation type="unpublished observations" date="2019-08">
        <authorList>
            <person name="Puppione D.L."/>
        </authorList>
    </citation>
    <scope>IDENTIFICATION</scope>
</reference>
<dbReference type="EMBL" id="NINY01000000">
    <property type="status" value="NOT_ANNOTATED_CDS"/>
    <property type="molecule type" value="Genomic_DNA"/>
</dbReference>
<dbReference type="RefSeq" id="XP_021537002.1">
    <property type="nucleotide sequence ID" value="XM_021681327.1"/>
</dbReference>
<dbReference type="GeneID" id="110572908"/>
<dbReference type="InParanoid" id="A0A2Y9GDB5"/>
<dbReference type="Proteomes" id="UP000248481">
    <property type="component" value="Chromosome 16"/>
</dbReference>
<dbReference type="GO" id="GO:0034364">
    <property type="term" value="C:high-density lipoprotein particle"/>
    <property type="evidence" value="ECO:0007669"/>
    <property type="project" value="TreeGrafter"/>
</dbReference>
<dbReference type="GO" id="GO:0034361">
    <property type="term" value="C:very-low-density lipoprotein particle"/>
    <property type="evidence" value="ECO:0007669"/>
    <property type="project" value="TreeGrafter"/>
</dbReference>
<dbReference type="GO" id="GO:0006869">
    <property type="term" value="P:lipid transport"/>
    <property type="evidence" value="ECO:0007669"/>
    <property type="project" value="UniProtKB-KW"/>
</dbReference>
<dbReference type="GO" id="GO:0010890">
    <property type="term" value="P:positive regulation of triglyceride storage"/>
    <property type="evidence" value="ECO:0007669"/>
    <property type="project" value="TreeGrafter"/>
</dbReference>
<dbReference type="GO" id="GO:0070328">
    <property type="term" value="P:triglyceride homeostasis"/>
    <property type="evidence" value="ECO:0007669"/>
    <property type="project" value="TreeGrafter"/>
</dbReference>
<dbReference type="InterPro" id="IPR028120">
    <property type="entry name" value="APOC4"/>
</dbReference>
<dbReference type="PANTHER" id="PTHR32288">
    <property type="entry name" value="APOLIPOPROTEIN C-IV"/>
    <property type="match status" value="1"/>
</dbReference>
<dbReference type="PANTHER" id="PTHR32288:SF0">
    <property type="entry name" value="APOLIPOPROTEIN C-IV"/>
    <property type="match status" value="1"/>
</dbReference>
<dbReference type="Pfam" id="PF15119">
    <property type="entry name" value="APOC4"/>
    <property type="match status" value="1"/>
</dbReference>
<accession>A0A2Y9GDB5</accession>
<sequence length="123" mass="13715">MLPPGLSPQALPSLCFCILVLACVVACQQAVPTESPSPQPELASGFWSLVPDNMKALVTRTRDKWQWFWGPEAVQGFVQTYYDDHLKDLSLRSQAWLKSSKDSLLNRAHNLCPRLLCGDGDQN</sequence>
<evidence type="ECO:0000250" key="1"/>
<evidence type="ECO:0000250" key="2">
    <source>
        <dbReference type="UniProtKB" id="P55057"/>
    </source>
</evidence>
<evidence type="ECO:0000305" key="3"/>
<proteinExistence type="inferred from homology"/>
<gene>
    <name type="primary">APOC4</name>
</gene>
<name>APOC4_NEOSC</name>
<organism>
    <name type="scientific">Neomonachus schauinslandi</name>
    <name type="common">Hawaiian monk seal</name>
    <name type="synonym">Monachus schauinslandi</name>
    <dbReference type="NCBI Taxonomy" id="29088"/>
    <lineage>
        <taxon>Eukaryota</taxon>
        <taxon>Metazoa</taxon>
        <taxon>Chordata</taxon>
        <taxon>Craniata</taxon>
        <taxon>Vertebrata</taxon>
        <taxon>Euteleostomi</taxon>
        <taxon>Mammalia</taxon>
        <taxon>Eutheria</taxon>
        <taxon>Laurasiatheria</taxon>
        <taxon>Carnivora</taxon>
        <taxon>Caniformia</taxon>
        <taxon>Pinnipedia</taxon>
        <taxon>Phocidae</taxon>
        <taxon>Monachinae</taxon>
        <taxon>Monachini</taxon>
        <taxon>Neomonachus</taxon>
    </lineage>
</organism>
<protein>
    <recommendedName>
        <fullName>Apolipoprotein C-IV</fullName>
        <shortName>Apo-CIV</shortName>
        <shortName>ApoC-IV</shortName>
    </recommendedName>
    <alternativeName>
        <fullName>Apolipoprotein C4</fullName>
    </alternativeName>
</protein>